<organism>
    <name type="scientific">Caenorhabditis elegans</name>
    <dbReference type="NCBI Taxonomy" id="6239"/>
    <lineage>
        <taxon>Eukaryota</taxon>
        <taxon>Metazoa</taxon>
        <taxon>Ecdysozoa</taxon>
        <taxon>Nematoda</taxon>
        <taxon>Chromadorea</taxon>
        <taxon>Rhabditida</taxon>
        <taxon>Rhabditina</taxon>
        <taxon>Rhabditomorpha</taxon>
        <taxon>Rhabditoidea</taxon>
        <taxon>Rhabditidae</taxon>
        <taxon>Peloderinae</taxon>
        <taxon>Caenorhabditis</taxon>
    </lineage>
</organism>
<accession>Q93542</accession>
<accession>Q7Z0M6</accession>
<proteinExistence type="evidence at transcript level"/>
<comment type="function">
    <text evidence="2">Metalloprotease.</text>
</comment>
<comment type="cofactor">
    <cofactor evidence="4">
        <name>Zn(2+)</name>
        <dbReference type="ChEBI" id="CHEBI:29105"/>
    </cofactor>
    <text evidence="4">Binds 1 zinc ion per subunit.</text>
</comment>
<comment type="subcellular location">
    <subcellularLocation>
        <location evidence="5">Secreted</location>
    </subcellularLocation>
</comment>
<evidence type="ECO:0000250" key="1"/>
<evidence type="ECO:0000250" key="2">
    <source>
        <dbReference type="UniProtKB" id="A8Q2D1"/>
    </source>
</evidence>
<evidence type="ECO:0000255" key="3"/>
<evidence type="ECO:0000255" key="4">
    <source>
        <dbReference type="PROSITE-ProRule" id="PRU01211"/>
    </source>
</evidence>
<evidence type="ECO:0000305" key="5"/>
<sequence>MTRVVHIIGAAFLLSSYAYCGLSRFNEHDIEGGDSYKRVKREFERLGSKWLGGTINYYYADNNNSVKEKVKSAIAYIANHTCIKFNEDPTHWQRLKIFTSELSHCRSTIGAPGTRSGSAGELSMETGWCANIGSIVHEFSHSLGRYHEHTRPDRDNSLKVTSTDYEARPRPWGMTTMYGPFEHGSIMMYHSSNYGVGKMEPYDMEYKNTMGSRRVTFYDMYKINQYYGCGCSTQLECKNGGYTSPSDCSRCNCPKGFFGKLCNERRQQDSYELKATYGRWQTQTISFNYKPEPVSDGFYSTFVYITGEANSTIEITMEGLENVICTAGCTWNGVEIKSREDSRITSPVMCCKDEPLYKKVFKSLHNPTIIELYSKETAPSTATFKYRFMNDKIVFG</sequence>
<reference key="1">
    <citation type="journal article" date="1998" name="Science">
        <title>Genome sequence of the nematode C. elegans: a platform for investigating biology.</title>
        <authorList>
            <consortium name="The C. elegans sequencing consortium"/>
        </authorList>
    </citation>
    <scope>NUCLEOTIDE SEQUENCE [LARGE SCALE GENOMIC DNA]</scope>
    <source>
        <strain>Bristol N2</strain>
    </source>
</reference>
<reference key="2">
    <citation type="journal article" date="2003" name="Eur. J. Biochem.">
        <title>The astacin protein family in Caenorhabditis elegans.</title>
        <authorList>
            <person name="Moehrlen F."/>
            <person name="Hutter H."/>
            <person name="Zwilling R."/>
        </authorList>
    </citation>
    <scope>NUCLEOTIDE SEQUENCE [MRNA] OF 280-327</scope>
    <scope>NOMENCLATURE</scope>
    <source>
        <strain>Bristol N2</strain>
    </source>
</reference>
<feature type="signal peptide" evidence="3">
    <location>
        <begin position="1"/>
        <end position="20"/>
    </location>
</feature>
<feature type="propeptide" id="PRO_0000442671" evidence="5">
    <location>
        <begin position="21"/>
        <end status="unknown"/>
    </location>
</feature>
<feature type="chain" id="PRO_0000028928" description="Zinc metalloproteinase nas-24">
    <location>
        <begin status="unknown"/>
        <end position="396"/>
    </location>
</feature>
<feature type="domain" description="Peptidase M12A" evidence="4">
    <location>
        <begin position="44"/>
        <end position="230"/>
    </location>
</feature>
<feature type="domain" description="EGF-like">
    <location>
        <begin position="224"/>
        <end position="263"/>
    </location>
</feature>
<feature type="active site" evidence="4">
    <location>
        <position position="138"/>
    </location>
</feature>
<feature type="binding site" evidence="4">
    <location>
        <position position="137"/>
    </location>
    <ligand>
        <name>Zn(2+)</name>
        <dbReference type="ChEBI" id="CHEBI:29105"/>
        <note>catalytic</note>
    </ligand>
</feature>
<feature type="binding site" evidence="4">
    <location>
        <position position="141"/>
    </location>
    <ligand>
        <name>Zn(2+)</name>
        <dbReference type="ChEBI" id="CHEBI:29105"/>
        <note>catalytic</note>
    </ligand>
</feature>
<feature type="binding site" evidence="4">
    <location>
        <position position="147"/>
    </location>
    <ligand>
        <name>Zn(2+)</name>
        <dbReference type="ChEBI" id="CHEBI:29105"/>
        <note>catalytic</note>
    </ligand>
</feature>
<feature type="glycosylation site" description="N-linked (GlcNAc...) asparagine" evidence="3">
    <location>
        <position position="63"/>
    </location>
</feature>
<feature type="glycosylation site" description="N-linked (GlcNAc...) asparagine" evidence="3">
    <location>
        <position position="79"/>
    </location>
</feature>
<feature type="glycosylation site" description="N-linked (GlcNAc...) asparagine" evidence="3">
    <location>
        <position position="310"/>
    </location>
</feature>
<feature type="disulfide bond" evidence="4">
    <location>
        <begin position="82"/>
        <end position="229"/>
    </location>
</feature>
<feature type="disulfide bond" evidence="4">
    <location>
        <begin position="105"/>
        <end position="129"/>
    </location>
</feature>
<feature type="disulfide bond" evidence="1">
    <location>
        <begin position="231"/>
        <end position="251"/>
    </location>
</feature>
<feature type="disulfide bond" evidence="1">
    <location>
        <begin position="253"/>
        <end position="262"/>
    </location>
</feature>
<protein>
    <recommendedName>
        <fullName>Zinc metalloproteinase nas-24</fullName>
        <ecNumber evidence="2">3.4.24.-</ecNumber>
    </recommendedName>
    <alternativeName>
        <fullName>Nematode astacin 24</fullName>
    </alternativeName>
</protein>
<gene>
    <name type="primary">nas-24</name>
    <name type="ORF">F20G2.4</name>
</gene>
<keyword id="KW-1015">Disulfide bond</keyword>
<keyword id="KW-0245">EGF-like domain</keyword>
<keyword id="KW-0325">Glycoprotein</keyword>
<keyword id="KW-0378">Hydrolase</keyword>
<keyword id="KW-0479">Metal-binding</keyword>
<keyword id="KW-0482">Metalloprotease</keyword>
<keyword id="KW-0645">Protease</keyword>
<keyword id="KW-1185">Reference proteome</keyword>
<keyword id="KW-0964">Secreted</keyword>
<keyword id="KW-0732">Signal</keyword>
<keyword id="KW-0862">Zinc</keyword>
<keyword id="KW-0865">Zymogen</keyword>
<name>NAS24_CAEEL</name>
<dbReference type="EC" id="3.4.24.-" evidence="2"/>
<dbReference type="EMBL" id="Z79753">
    <property type="protein sequence ID" value="CAB02084.2"/>
    <property type="molecule type" value="Genomic_DNA"/>
</dbReference>
<dbReference type="EMBL" id="AJ561214">
    <property type="protein sequence ID" value="CAD99215.1"/>
    <property type="molecule type" value="mRNA"/>
</dbReference>
<dbReference type="PIR" id="T21166">
    <property type="entry name" value="T21166"/>
</dbReference>
<dbReference type="RefSeq" id="NP_506409.2">
    <property type="nucleotide sequence ID" value="NM_074008.6"/>
</dbReference>
<dbReference type="SMR" id="Q93542"/>
<dbReference type="FunCoup" id="Q93542">
    <property type="interactions" value="1"/>
</dbReference>
<dbReference type="STRING" id="6239.F20G2.4.1"/>
<dbReference type="MEROPS" id="M12.A39"/>
<dbReference type="GlyCosmos" id="Q93542">
    <property type="glycosylation" value="3 sites, No reported glycans"/>
</dbReference>
<dbReference type="PaxDb" id="6239-F20G2.4"/>
<dbReference type="PeptideAtlas" id="Q93542"/>
<dbReference type="EnsemblMetazoa" id="F20G2.4.1">
    <property type="protein sequence ID" value="F20G2.4.1"/>
    <property type="gene ID" value="WBGene00003543"/>
</dbReference>
<dbReference type="GeneID" id="184744"/>
<dbReference type="KEGG" id="cel:CELE_F20G2.4"/>
<dbReference type="UCSC" id="F20G2.4">
    <property type="organism name" value="c. elegans"/>
</dbReference>
<dbReference type="AGR" id="WB:WBGene00003543"/>
<dbReference type="CTD" id="184744"/>
<dbReference type="WormBase" id="F20G2.4">
    <property type="protein sequence ID" value="CE35860"/>
    <property type="gene ID" value="WBGene00003543"/>
    <property type="gene designation" value="nas-24"/>
</dbReference>
<dbReference type="eggNOG" id="KOG3714">
    <property type="taxonomic scope" value="Eukaryota"/>
</dbReference>
<dbReference type="GeneTree" id="ENSGT00940000169788"/>
<dbReference type="HOGENOM" id="CLU_017286_1_1_1"/>
<dbReference type="InParanoid" id="Q93542"/>
<dbReference type="OMA" id="THIHELM"/>
<dbReference type="OrthoDB" id="291007at2759"/>
<dbReference type="PhylomeDB" id="Q93542"/>
<dbReference type="PRO" id="PR:Q93542"/>
<dbReference type="Proteomes" id="UP000001940">
    <property type="component" value="Chromosome V"/>
</dbReference>
<dbReference type="Bgee" id="WBGene00003543">
    <property type="expression patterns" value="Expressed in adult organism and 1 other cell type or tissue"/>
</dbReference>
<dbReference type="GO" id="GO:0005576">
    <property type="term" value="C:extracellular region"/>
    <property type="evidence" value="ECO:0007669"/>
    <property type="project" value="UniProtKB-SubCell"/>
</dbReference>
<dbReference type="GO" id="GO:0004222">
    <property type="term" value="F:metalloendopeptidase activity"/>
    <property type="evidence" value="ECO:0000318"/>
    <property type="project" value="GO_Central"/>
</dbReference>
<dbReference type="GO" id="GO:0008270">
    <property type="term" value="F:zinc ion binding"/>
    <property type="evidence" value="ECO:0007669"/>
    <property type="project" value="InterPro"/>
</dbReference>
<dbReference type="GO" id="GO:0018996">
    <property type="term" value="P:molting cycle, collagen and cuticulin-based cuticle"/>
    <property type="evidence" value="ECO:0007669"/>
    <property type="project" value="InterPro"/>
</dbReference>
<dbReference type="GO" id="GO:0006508">
    <property type="term" value="P:proteolysis"/>
    <property type="evidence" value="ECO:0007669"/>
    <property type="project" value="UniProtKB-KW"/>
</dbReference>
<dbReference type="FunFam" id="3.40.390.10:FF:000141">
    <property type="entry name" value="Zinc metalloproteinase nas-24"/>
    <property type="match status" value="1"/>
</dbReference>
<dbReference type="Gene3D" id="3.40.390.10">
    <property type="entry name" value="Collagenase (Catalytic Domain)"/>
    <property type="match status" value="1"/>
</dbReference>
<dbReference type="InterPro" id="IPR024079">
    <property type="entry name" value="MetalloPept_cat_dom_sf"/>
</dbReference>
<dbReference type="InterPro" id="IPR017050">
    <property type="entry name" value="Metallopeptidase_nem"/>
</dbReference>
<dbReference type="InterPro" id="IPR001506">
    <property type="entry name" value="Peptidase_M12A"/>
</dbReference>
<dbReference type="InterPro" id="IPR006026">
    <property type="entry name" value="Peptidase_Metallo"/>
</dbReference>
<dbReference type="PANTHER" id="PTHR10127">
    <property type="entry name" value="DISCOIDIN, CUB, EGF, LAMININ , AND ZINC METALLOPROTEASE DOMAIN CONTAINING"/>
    <property type="match status" value="1"/>
</dbReference>
<dbReference type="PANTHER" id="PTHR10127:SF857">
    <property type="entry name" value="ZINC METALLOPROTEINASE NAS-19-RELATED"/>
    <property type="match status" value="1"/>
</dbReference>
<dbReference type="Pfam" id="PF01400">
    <property type="entry name" value="Astacin"/>
    <property type="match status" value="1"/>
</dbReference>
<dbReference type="PIRSF" id="PIRSF036365">
    <property type="entry name" value="Astacin_nematoda"/>
    <property type="match status" value="1"/>
</dbReference>
<dbReference type="PRINTS" id="PR00480">
    <property type="entry name" value="ASTACIN"/>
</dbReference>
<dbReference type="SMART" id="SM00235">
    <property type="entry name" value="ZnMc"/>
    <property type="match status" value="1"/>
</dbReference>
<dbReference type="SUPFAM" id="SSF55486">
    <property type="entry name" value="Metalloproteases ('zincins'), catalytic domain"/>
    <property type="match status" value="1"/>
</dbReference>
<dbReference type="PROSITE" id="PS51864">
    <property type="entry name" value="ASTACIN"/>
    <property type="match status" value="1"/>
</dbReference>
<dbReference type="PROSITE" id="PS00022">
    <property type="entry name" value="EGF_1"/>
    <property type="match status" value="1"/>
</dbReference>
<dbReference type="PROSITE" id="PS01186">
    <property type="entry name" value="EGF_2"/>
    <property type="match status" value="1"/>
</dbReference>
<dbReference type="PROSITE" id="PS00142">
    <property type="entry name" value="ZINC_PROTEASE"/>
    <property type="match status" value="1"/>
</dbReference>